<dbReference type="EC" id="2.8.1.7" evidence="1"/>
<dbReference type="EMBL" id="CP001321">
    <property type="protein sequence ID" value="ACL31758.1"/>
    <property type="molecule type" value="Genomic_DNA"/>
</dbReference>
<dbReference type="RefSeq" id="WP_005713706.1">
    <property type="nucleotide sequence ID" value="NC_011852.1"/>
</dbReference>
<dbReference type="SMR" id="B8F356"/>
<dbReference type="STRING" id="557723.HAPS_0053"/>
<dbReference type="KEGG" id="hap:HAPS_0053"/>
<dbReference type="HOGENOM" id="CLU_003433_0_2_6"/>
<dbReference type="UniPathway" id="UPA00266"/>
<dbReference type="Proteomes" id="UP000006743">
    <property type="component" value="Chromosome"/>
</dbReference>
<dbReference type="GO" id="GO:1990221">
    <property type="term" value="C:L-cysteine desulfurase complex"/>
    <property type="evidence" value="ECO:0007669"/>
    <property type="project" value="UniProtKB-ARBA"/>
</dbReference>
<dbReference type="GO" id="GO:0051537">
    <property type="term" value="F:2 iron, 2 sulfur cluster binding"/>
    <property type="evidence" value="ECO:0007669"/>
    <property type="project" value="UniProtKB-UniRule"/>
</dbReference>
<dbReference type="GO" id="GO:0031071">
    <property type="term" value="F:cysteine desulfurase activity"/>
    <property type="evidence" value="ECO:0007669"/>
    <property type="project" value="UniProtKB-UniRule"/>
</dbReference>
<dbReference type="GO" id="GO:0046872">
    <property type="term" value="F:metal ion binding"/>
    <property type="evidence" value="ECO:0007669"/>
    <property type="project" value="UniProtKB-KW"/>
</dbReference>
<dbReference type="GO" id="GO:0030170">
    <property type="term" value="F:pyridoxal phosphate binding"/>
    <property type="evidence" value="ECO:0007669"/>
    <property type="project" value="UniProtKB-UniRule"/>
</dbReference>
<dbReference type="GO" id="GO:0044571">
    <property type="term" value="P:[2Fe-2S] cluster assembly"/>
    <property type="evidence" value="ECO:0007669"/>
    <property type="project" value="UniProtKB-UniRule"/>
</dbReference>
<dbReference type="FunFam" id="3.40.640.10:FF:000003">
    <property type="entry name" value="Cysteine desulfurase IscS"/>
    <property type="match status" value="1"/>
</dbReference>
<dbReference type="FunFam" id="3.90.1150.10:FF:000002">
    <property type="entry name" value="Cysteine desulfurase IscS"/>
    <property type="match status" value="1"/>
</dbReference>
<dbReference type="Gene3D" id="3.90.1150.10">
    <property type="entry name" value="Aspartate Aminotransferase, domain 1"/>
    <property type="match status" value="1"/>
</dbReference>
<dbReference type="Gene3D" id="3.40.640.10">
    <property type="entry name" value="Type I PLP-dependent aspartate aminotransferase-like (Major domain)"/>
    <property type="match status" value="1"/>
</dbReference>
<dbReference type="HAMAP" id="MF_00331">
    <property type="entry name" value="Cys_desulf_IscS"/>
    <property type="match status" value="1"/>
</dbReference>
<dbReference type="InterPro" id="IPR000192">
    <property type="entry name" value="Aminotrans_V_dom"/>
</dbReference>
<dbReference type="InterPro" id="IPR020578">
    <property type="entry name" value="Aminotrans_V_PyrdxlP_BS"/>
</dbReference>
<dbReference type="InterPro" id="IPR010240">
    <property type="entry name" value="Cys_deSase_IscS"/>
</dbReference>
<dbReference type="InterPro" id="IPR016454">
    <property type="entry name" value="Cysteine_dSase"/>
</dbReference>
<dbReference type="InterPro" id="IPR015424">
    <property type="entry name" value="PyrdxlP-dep_Trfase"/>
</dbReference>
<dbReference type="InterPro" id="IPR015421">
    <property type="entry name" value="PyrdxlP-dep_Trfase_major"/>
</dbReference>
<dbReference type="InterPro" id="IPR015422">
    <property type="entry name" value="PyrdxlP-dep_Trfase_small"/>
</dbReference>
<dbReference type="NCBIfam" id="TIGR02006">
    <property type="entry name" value="IscS"/>
    <property type="match status" value="1"/>
</dbReference>
<dbReference type="NCBIfam" id="NF002806">
    <property type="entry name" value="PRK02948.1"/>
    <property type="match status" value="1"/>
</dbReference>
<dbReference type="NCBIfam" id="NF010611">
    <property type="entry name" value="PRK14012.1"/>
    <property type="match status" value="1"/>
</dbReference>
<dbReference type="PANTHER" id="PTHR11601:SF34">
    <property type="entry name" value="CYSTEINE DESULFURASE"/>
    <property type="match status" value="1"/>
</dbReference>
<dbReference type="PANTHER" id="PTHR11601">
    <property type="entry name" value="CYSTEINE DESULFURYLASE FAMILY MEMBER"/>
    <property type="match status" value="1"/>
</dbReference>
<dbReference type="Pfam" id="PF00266">
    <property type="entry name" value="Aminotran_5"/>
    <property type="match status" value="1"/>
</dbReference>
<dbReference type="PIRSF" id="PIRSF005572">
    <property type="entry name" value="NifS"/>
    <property type="match status" value="1"/>
</dbReference>
<dbReference type="SUPFAM" id="SSF53383">
    <property type="entry name" value="PLP-dependent transferases"/>
    <property type="match status" value="1"/>
</dbReference>
<dbReference type="PROSITE" id="PS00595">
    <property type="entry name" value="AA_TRANSFER_CLASS_5"/>
    <property type="match status" value="1"/>
</dbReference>
<evidence type="ECO:0000255" key="1">
    <source>
        <dbReference type="HAMAP-Rule" id="MF_00331"/>
    </source>
</evidence>
<feature type="chain" id="PRO_1000133118" description="Cysteine desulfurase IscS">
    <location>
        <begin position="1"/>
        <end position="406"/>
    </location>
</feature>
<feature type="active site" description="Cysteine persulfide intermediate" evidence="1">
    <location>
        <position position="330"/>
    </location>
</feature>
<feature type="binding site" evidence="1">
    <location>
        <begin position="75"/>
        <end position="76"/>
    </location>
    <ligand>
        <name>pyridoxal 5'-phosphate</name>
        <dbReference type="ChEBI" id="CHEBI:597326"/>
    </ligand>
</feature>
<feature type="binding site" evidence="1">
    <location>
        <position position="155"/>
    </location>
    <ligand>
        <name>pyridoxal 5'-phosphate</name>
        <dbReference type="ChEBI" id="CHEBI:597326"/>
    </ligand>
</feature>
<feature type="binding site" evidence="1">
    <location>
        <position position="183"/>
    </location>
    <ligand>
        <name>pyridoxal 5'-phosphate</name>
        <dbReference type="ChEBI" id="CHEBI:597326"/>
    </ligand>
</feature>
<feature type="binding site" evidence="1">
    <location>
        <begin position="203"/>
        <end position="205"/>
    </location>
    <ligand>
        <name>pyridoxal 5'-phosphate</name>
        <dbReference type="ChEBI" id="CHEBI:597326"/>
    </ligand>
</feature>
<feature type="binding site" evidence="1">
    <location>
        <position position="243"/>
    </location>
    <ligand>
        <name>pyridoxal 5'-phosphate</name>
        <dbReference type="ChEBI" id="CHEBI:597326"/>
    </ligand>
</feature>
<feature type="binding site" description="via persulfide group" evidence="1">
    <location>
        <position position="330"/>
    </location>
    <ligand>
        <name>[2Fe-2S] cluster</name>
        <dbReference type="ChEBI" id="CHEBI:190135"/>
        <note>ligand shared with IscU</note>
    </ligand>
</feature>
<feature type="modified residue" description="N6-(pyridoxal phosphate)lysine" evidence="1">
    <location>
        <position position="206"/>
    </location>
</feature>
<reference key="1">
    <citation type="journal article" date="2009" name="J. Bacteriol.">
        <title>Complete genome sequence of Haemophilus parasuis SH0165.</title>
        <authorList>
            <person name="Yue M."/>
            <person name="Yang F."/>
            <person name="Yang J."/>
            <person name="Bei W."/>
            <person name="Cai X."/>
            <person name="Chen L."/>
            <person name="Dong J."/>
            <person name="Zhou R."/>
            <person name="Jin M."/>
            <person name="Jin Q."/>
            <person name="Chen H."/>
        </authorList>
    </citation>
    <scope>NUCLEOTIDE SEQUENCE [LARGE SCALE GENOMIC DNA]</scope>
    <source>
        <strain>SH0165</strain>
    </source>
</reference>
<keyword id="KW-0001">2Fe-2S</keyword>
<keyword id="KW-0963">Cytoplasm</keyword>
<keyword id="KW-0408">Iron</keyword>
<keyword id="KW-0411">Iron-sulfur</keyword>
<keyword id="KW-0479">Metal-binding</keyword>
<keyword id="KW-0663">Pyridoxal phosphate</keyword>
<keyword id="KW-1185">Reference proteome</keyword>
<keyword id="KW-0808">Transferase</keyword>
<organism>
    <name type="scientific">Glaesserella parasuis serovar 5 (strain SH0165)</name>
    <name type="common">Haemophilus parasuis</name>
    <dbReference type="NCBI Taxonomy" id="557723"/>
    <lineage>
        <taxon>Bacteria</taxon>
        <taxon>Pseudomonadati</taxon>
        <taxon>Pseudomonadota</taxon>
        <taxon>Gammaproteobacteria</taxon>
        <taxon>Pasteurellales</taxon>
        <taxon>Pasteurellaceae</taxon>
        <taxon>Glaesserella</taxon>
    </lineage>
</organism>
<protein>
    <recommendedName>
        <fullName evidence="1">Cysteine desulfurase IscS</fullName>
        <ecNumber evidence="1">2.8.1.7</ecNumber>
    </recommendedName>
</protein>
<comment type="function">
    <text evidence="1">Master enzyme that delivers sulfur to a number of partners involved in Fe-S cluster assembly, tRNA modification or cofactor biosynthesis. Catalyzes the removal of elemental sulfur atoms from cysteine to produce alanine. Functions as a sulfur delivery protein for Fe-S cluster synthesis onto IscU, an Fe-S scaffold assembly protein, as well as other S acceptor proteins.</text>
</comment>
<comment type="catalytic activity">
    <reaction evidence="1">
        <text>(sulfur carrier)-H + L-cysteine = (sulfur carrier)-SH + L-alanine</text>
        <dbReference type="Rhea" id="RHEA:43892"/>
        <dbReference type="Rhea" id="RHEA-COMP:14737"/>
        <dbReference type="Rhea" id="RHEA-COMP:14739"/>
        <dbReference type="ChEBI" id="CHEBI:29917"/>
        <dbReference type="ChEBI" id="CHEBI:35235"/>
        <dbReference type="ChEBI" id="CHEBI:57972"/>
        <dbReference type="ChEBI" id="CHEBI:64428"/>
        <dbReference type="EC" id="2.8.1.7"/>
    </reaction>
</comment>
<comment type="cofactor">
    <cofactor evidence="1">
        <name>pyridoxal 5'-phosphate</name>
        <dbReference type="ChEBI" id="CHEBI:597326"/>
    </cofactor>
</comment>
<comment type="pathway">
    <text evidence="1">Cofactor biosynthesis; iron-sulfur cluster biosynthesis.</text>
</comment>
<comment type="subunit">
    <text evidence="1">Homodimer. Forms a heterotetramer with IscU, interacts with other sulfur acceptors.</text>
</comment>
<comment type="subcellular location">
    <subcellularLocation>
        <location evidence="1">Cytoplasm</location>
    </subcellularLocation>
</comment>
<comment type="similarity">
    <text evidence="1">Belongs to the class-V pyridoxal-phosphate-dependent aminotransferase family. NifS/IscS subfamily.</text>
</comment>
<proteinExistence type="inferred from homology"/>
<sequence>MKLPIYLDYAATTPVDERVAKKMMEYMTKDGVFGNPASRSHKFGWEAEEAVDVARNQIADLIGADAREIVFTSGATESDNLAIKGAAHFYQTKGKHIITVKTEHKAVLDTCRQLEREGFEVTYLEPETTGLVDIAKLEAAIRPDTILVSVMQVNNEIGVIQPIEEIGKICRAKKIIFHVDATQSVGKIPVDVQALNVDLMSFSSHKLYGPKGIGGLYVCRKPRVRLEAIIHGGGHERGMRSGTLPVHQIVGMGEAYRIAKEEMVTEMPRIKALRDRLYNGFKDMEEVYVNGTMEAGKRVDSNLNISFNFVEGESMMMSLKDIAVSSGSACTSASLEPSYVLRALGLNDELAHSSIRFSIGRWTTEEEIDHTIEIVKKAVTKLRELSPLWDMFKEGIDLNSIEWSHH</sequence>
<gene>
    <name evidence="1" type="primary">iscS</name>
    <name type="ordered locus">HAPS_0053</name>
</gene>
<accession>B8F356</accession>
<name>ISCS_GLAP5</name>